<comment type="function">
    <text evidence="2">Forms part of the ribosomal stalk, playing a central role in the interaction of the ribosome with GTP-bound translation factors.</text>
</comment>
<comment type="subunit">
    <text evidence="2">Part of the ribosomal stalk of the 50S ribosomal subunit. The N-terminus interacts with L11 and the large rRNA to form the base of the stalk. The C-terminus forms an elongated spine to which L12 dimers bind in a sequential fashion forming a multimeric L10(L12)X complex.</text>
</comment>
<comment type="similarity">
    <text evidence="2">Belongs to the universal ribosomal protein uL10 family.</text>
</comment>
<accession>P0DD98</accession>
<accession>Q8K7L4</accession>
<feature type="initiator methionine" description="Removed" evidence="1">
    <location>
        <position position="1"/>
    </location>
</feature>
<feature type="chain" id="PRO_0000154725" description="Large ribosomal subunit protein uL10">
    <location>
        <begin position="2"/>
        <end position="166"/>
    </location>
</feature>
<protein>
    <recommendedName>
        <fullName evidence="2">Large ribosomal subunit protein uL10</fullName>
    </recommendedName>
    <alternativeName>
        <fullName evidence="3">50S ribosomal protein L10</fullName>
    </alternativeName>
</protein>
<keyword id="KW-0687">Ribonucleoprotein</keyword>
<keyword id="KW-0689">Ribosomal protein</keyword>
<keyword id="KW-0694">RNA-binding</keyword>
<keyword id="KW-0699">rRNA-binding</keyword>
<name>RL10_STRP3</name>
<sequence length="166" mass="17551">MSEAIIAKKAEQVELIAEKMKAAASIVVVDSRGLTVDQDTVLRRSLRESGVEFKVIKNSILTRAAEKAGLDELKDVFVGPSAVAFSNEDVIAPAKVINDFTKTADALEIKGGAIEGAVSSKEEIQALATLPNREGMLSMLLSVLQAPVRNVAYAVKAVAENKEGAA</sequence>
<dbReference type="EMBL" id="AE014074">
    <property type="protein sequence ID" value="AAM79360.1"/>
    <property type="molecule type" value="Genomic_DNA"/>
</dbReference>
<dbReference type="RefSeq" id="WP_002984821.1">
    <property type="nucleotide sequence ID" value="NC_004070.1"/>
</dbReference>
<dbReference type="SMR" id="P0DD98"/>
<dbReference type="GeneID" id="69900916"/>
<dbReference type="KEGG" id="spg:SpyM3_0753"/>
<dbReference type="HOGENOM" id="CLU_092227_2_0_9"/>
<dbReference type="Proteomes" id="UP000000564">
    <property type="component" value="Chromosome"/>
</dbReference>
<dbReference type="GO" id="GO:0015934">
    <property type="term" value="C:large ribosomal subunit"/>
    <property type="evidence" value="ECO:0007669"/>
    <property type="project" value="InterPro"/>
</dbReference>
<dbReference type="GO" id="GO:0070180">
    <property type="term" value="F:large ribosomal subunit rRNA binding"/>
    <property type="evidence" value="ECO:0007669"/>
    <property type="project" value="UniProtKB-UniRule"/>
</dbReference>
<dbReference type="GO" id="GO:0003735">
    <property type="term" value="F:structural constituent of ribosome"/>
    <property type="evidence" value="ECO:0007669"/>
    <property type="project" value="InterPro"/>
</dbReference>
<dbReference type="GO" id="GO:0006412">
    <property type="term" value="P:translation"/>
    <property type="evidence" value="ECO:0007669"/>
    <property type="project" value="UniProtKB-UniRule"/>
</dbReference>
<dbReference type="CDD" id="cd05797">
    <property type="entry name" value="Ribosomal_L10"/>
    <property type="match status" value="1"/>
</dbReference>
<dbReference type="FunFam" id="3.30.70.1730:FF:000001">
    <property type="entry name" value="50S ribosomal protein L10"/>
    <property type="match status" value="1"/>
</dbReference>
<dbReference type="Gene3D" id="3.30.70.1730">
    <property type="match status" value="1"/>
</dbReference>
<dbReference type="HAMAP" id="MF_00362">
    <property type="entry name" value="Ribosomal_uL10"/>
    <property type="match status" value="1"/>
</dbReference>
<dbReference type="InterPro" id="IPR001790">
    <property type="entry name" value="Ribosomal_uL10"/>
</dbReference>
<dbReference type="InterPro" id="IPR043141">
    <property type="entry name" value="Ribosomal_uL10-like_sf"/>
</dbReference>
<dbReference type="InterPro" id="IPR022973">
    <property type="entry name" value="Ribosomal_uL10_bac"/>
</dbReference>
<dbReference type="InterPro" id="IPR047865">
    <property type="entry name" value="Ribosomal_uL10_bac_type"/>
</dbReference>
<dbReference type="InterPro" id="IPR002363">
    <property type="entry name" value="Ribosomal_uL10_CS_bac"/>
</dbReference>
<dbReference type="NCBIfam" id="NF000955">
    <property type="entry name" value="PRK00099.1-1"/>
    <property type="match status" value="1"/>
</dbReference>
<dbReference type="PANTHER" id="PTHR11560">
    <property type="entry name" value="39S RIBOSOMAL PROTEIN L10, MITOCHONDRIAL"/>
    <property type="match status" value="1"/>
</dbReference>
<dbReference type="Pfam" id="PF00466">
    <property type="entry name" value="Ribosomal_L10"/>
    <property type="match status" value="1"/>
</dbReference>
<dbReference type="SUPFAM" id="SSF160369">
    <property type="entry name" value="Ribosomal protein L10-like"/>
    <property type="match status" value="1"/>
</dbReference>
<dbReference type="PROSITE" id="PS01109">
    <property type="entry name" value="RIBOSOMAL_L10"/>
    <property type="match status" value="1"/>
</dbReference>
<proteinExistence type="inferred from homology"/>
<gene>
    <name evidence="2" type="primary">rplJ</name>
    <name type="ordered locus">SpyM3_0753</name>
</gene>
<organism>
    <name type="scientific">Streptococcus pyogenes serotype M3 (strain ATCC BAA-595 / MGAS315)</name>
    <dbReference type="NCBI Taxonomy" id="198466"/>
    <lineage>
        <taxon>Bacteria</taxon>
        <taxon>Bacillati</taxon>
        <taxon>Bacillota</taxon>
        <taxon>Bacilli</taxon>
        <taxon>Lactobacillales</taxon>
        <taxon>Streptococcaceae</taxon>
        <taxon>Streptococcus</taxon>
    </lineage>
</organism>
<reference key="1">
    <citation type="journal article" date="2002" name="Proc. Natl. Acad. Sci. U.S.A.">
        <title>Genome sequence of a serotype M3 strain of group A Streptococcus: phage-encoded toxins, the high-virulence phenotype, and clone emergence.</title>
        <authorList>
            <person name="Beres S.B."/>
            <person name="Sylva G.L."/>
            <person name="Barbian K.D."/>
            <person name="Lei B."/>
            <person name="Hoff J.S."/>
            <person name="Mammarella N.D."/>
            <person name="Liu M.-Y."/>
            <person name="Smoot J.C."/>
            <person name="Porcella S.F."/>
            <person name="Parkins L.D."/>
            <person name="Campbell D.S."/>
            <person name="Smith T.M."/>
            <person name="McCormick J.K."/>
            <person name="Leung D.Y.M."/>
            <person name="Schlievert P.M."/>
            <person name="Musser J.M."/>
        </authorList>
    </citation>
    <scope>NUCLEOTIDE SEQUENCE [LARGE SCALE GENOMIC DNA]</scope>
    <source>
        <strain>ATCC BAA-595 / MGAS315</strain>
    </source>
</reference>
<evidence type="ECO:0000250" key="1"/>
<evidence type="ECO:0000255" key="2">
    <source>
        <dbReference type="HAMAP-Rule" id="MF_00362"/>
    </source>
</evidence>
<evidence type="ECO:0000305" key="3"/>